<evidence type="ECO:0000250" key="1">
    <source>
        <dbReference type="UniProtKB" id="Q8IYB8"/>
    </source>
</evidence>
<evidence type="ECO:0000255" key="2"/>
<evidence type="ECO:0000255" key="3">
    <source>
        <dbReference type="PROSITE-ProRule" id="PRU00499"/>
    </source>
</evidence>
<evidence type="ECO:0000255" key="4">
    <source>
        <dbReference type="PROSITE-ProRule" id="PRU00542"/>
    </source>
</evidence>
<evidence type="ECO:0000256" key="5">
    <source>
        <dbReference type="SAM" id="MobiDB-lite"/>
    </source>
</evidence>
<evidence type="ECO:0000269" key="6">
    <source>
    </source>
</evidence>
<evidence type="ECO:0000305" key="7"/>
<gene>
    <name type="primary">Supv3l1</name>
    <name type="synonym">Suv3l1</name>
</gene>
<protein>
    <recommendedName>
        <fullName>ATP-dependent RNA helicase SUPV3L1, mitochondrial</fullName>
        <ecNumber evidence="1">3.6.4.13</ecNumber>
    </recommendedName>
    <alternativeName>
        <fullName>Suppressor of var1 3-like protein 1</fullName>
        <shortName>SUV3-like protein 1</shortName>
    </alternativeName>
</protein>
<sequence>MSLPRCTLLWARLPAGRGAGPRAAPCSALRALVGSFPGASGRVPCLAASSSASGGSKAPNTSLFVPLTVKPQGPSADGDVGAELTRPLDKNEVKKILDKFYKRQEIQKLSADYGLDARLFHQAFISFRNYIMQSHSLDVDIHIVLNDICFSAAHVDDLFPFFLRHAKQIFPVLECKDDLRKISDLRIPPNWYPEARARQRKIIFHSGPTNSGKTYHAIQRYLSATSGVYCGPLKLLAHEIFEKSNAAGVPCDLVTGEERLTVEPEGKQATHVSCTVEMCNVATPYEVAVIDEIQMIRDPARGWAWTRALLGLCAEEVHLCGESAAINLVSELLYTTGEEVEVQKYERLTPISVLDHALESLDNLQPGDCIVCFSKNDIYSVSRQIEIRGLESAVIYGSLPPGTKLAQARKFNDPNDPCKILVATDAIGMGLNLSIRRIIFYSLIKPSINEKGEKELEPITTSQALQIAGRAGRFSSHFKEGQVTTMHRDDLALLKDILNRPVDPIQAAGLHPTAEQIEMFAYHLPETTLSNLIDIFVDFAQVDGQYFVCNMDDFKFSAELIQHIPLSLRVRYVFCTAPINKKQPFVCSSLLQFARQYSRNEPLTFAWLRRYIKWPLLPPKNIKDLMDLEAVHDVFDLYLWLSYRFIDMFPDSSLVRSLQKELDAIIQEGVHNITKLIKISESRKLLNLESLPSGDQSRLSGASKSPARRTRGTKSAGNKATEPLSPSDKELPLASRLVQQGLLTADMLRQLQKEWLTQQPEHSREKVGTRRKKKDPDSD</sequence>
<feature type="transit peptide" description="Mitochondrion" evidence="2">
    <location>
        <begin position="1"/>
        <end position="40"/>
    </location>
</feature>
<feature type="chain" id="PRO_0000310546" description="ATP-dependent RNA helicase SUPV3L1, mitochondrial">
    <location>
        <begin position="41"/>
        <end position="779"/>
    </location>
</feature>
<feature type="domain" description="Helicase ATP-binding">
    <location>
        <begin position="194"/>
        <end position="334"/>
    </location>
</feature>
<feature type="domain" description="Helicase C-terminal" evidence="4">
    <location>
        <begin position="353"/>
        <end position="521"/>
    </location>
</feature>
<feature type="region of interest" description="Interaction with LAMTOR5, important for protein stability" evidence="1">
    <location>
        <begin position="650"/>
        <end position="779"/>
    </location>
</feature>
<feature type="region of interest" description="Disordered" evidence="5">
    <location>
        <begin position="693"/>
        <end position="732"/>
    </location>
</feature>
<feature type="region of interest" description="Disordered" evidence="5">
    <location>
        <begin position="754"/>
        <end position="779"/>
    </location>
</feature>
<feature type="compositionally biased region" description="Polar residues" evidence="5">
    <location>
        <begin position="693"/>
        <end position="703"/>
    </location>
</feature>
<feature type="compositionally biased region" description="Basic and acidic residues" evidence="5">
    <location>
        <begin position="761"/>
        <end position="779"/>
    </location>
</feature>
<feature type="binding site" evidence="3">
    <location>
        <begin position="207"/>
        <end position="214"/>
    </location>
    <ligand>
        <name>ATP</name>
        <dbReference type="ChEBI" id="CHEBI:30616"/>
    </ligand>
</feature>
<feature type="modified residue" description="N6-acetyllysine" evidence="1">
    <location>
        <position position="99"/>
    </location>
</feature>
<feature type="modified residue" description="Phosphoserine" evidence="1">
    <location>
        <position position="725"/>
    </location>
</feature>
<feature type="sequence conflict" description="In Ref. 1; CAI92124." evidence="7" ref="1">
    <original>L</original>
    <variation>R</variation>
    <location>
        <position position="109"/>
    </location>
</feature>
<feature type="sequence conflict" description="In Ref. 1; CAI92124." evidence="7" ref="1">
    <original>D</original>
    <variation>G</variation>
    <location>
        <position position="157"/>
    </location>
</feature>
<reference key="1">
    <citation type="submission" date="2005-05" db="EMBL/GenBank/DDBJ databases">
        <title>A null mutation existed in SUV3L1 of SAMP8/Ta.</title>
        <authorList>
            <person name="Zhang C."/>
            <person name="Yang T."/>
            <person name="Liu G."/>
            <person name="Chen Q."/>
        </authorList>
    </citation>
    <scope>NUCLEOTIDE SEQUENCE [MRNA]</scope>
    <source>
        <tissue>Brain</tissue>
    </source>
</reference>
<reference key="2">
    <citation type="journal article" date="2004" name="Genome Res.">
        <title>The status, quality, and expansion of the NIH full-length cDNA project: the Mammalian Gene Collection (MGC).</title>
        <authorList>
            <consortium name="The MGC Project Team"/>
        </authorList>
    </citation>
    <scope>NUCLEOTIDE SEQUENCE [LARGE SCALE MRNA]</scope>
    <source>
        <tissue>Embryo</tissue>
    </source>
</reference>
<reference key="3">
    <citation type="journal article" date="2007" name="Mech. Ageing Dev.">
        <title>Interaction of human SUV3 RNA/DNA helicase with BLM helicase; loss of the SUV3 gene results in mouse embryonic lethality.</title>
        <authorList>
            <person name="Pereira M."/>
            <person name="Mason P."/>
            <person name="Szczesny R.J."/>
            <person name="Maddukuri L."/>
            <person name="Dziwura S."/>
            <person name="Jedrzejczak R."/>
            <person name="Paul E."/>
            <person name="Wojcik A."/>
            <person name="Dybczynska L."/>
            <person name="Tudek B."/>
            <person name="Bartnik E."/>
            <person name="Klysik J."/>
            <person name="Bohr V.A."/>
            <person name="Stepien P.P."/>
        </authorList>
    </citation>
    <scope>DISRUPTION PHENOTYPE</scope>
</reference>
<reference key="4">
    <citation type="journal article" date="2010" name="Cell">
        <title>A tissue-specific atlas of mouse protein phosphorylation and expression.</title>
        <authorList>
            <person name="Huttlin E.L."/>
            <person name="Jedrychowski M.P."/>
            <person name="Elias J.E."/>
            <person name="Goswami T."/>
            <person name="Rad R."/>
            <person name="Beausoleil S.A."/>
            <person name="Villen J."/>
            <person name="Haas W."/>
            <person name="Sowa M.E."/>
            <person name="Gygi S.P."/>
        </authorList>
    </citation>
    <scope>IDENTIFICATION BY MASS SPECTROMETRY [LARGE SCALE ANALYSIS]</scope>
    <source>
        <tissue>Brain</tissue>
        <tissue>Brown adipose tissue</tissue>
        <tissue>Heart</tissue>
        <tissue>Kidney</tissue>
        <tissue>Liver</tissue>
        <tissue>Spleen</tissue>
        <tissue>Testis</tissue>
    </source>
</reference>
<dbReference type="EC" id="3.6.4.13" evidence="1"/>
<dbReference type="EMBL" id="AJ968954">
    <property type="protein sequence ID" value="CAI92124.1"/>
    <property type="molecule type" value="mRNA"/>
</dbReference>
<dbReference type="EMBL" id="BC049796">
    <property type="protein sequence ID" value="AAH49796.1"/>
    <property type="molecule type" value="mRNA"/>
</dbReference>
<dbReference type="CCDS" id="CCDS35920.1"/>
<dbReference type="RefSeq" id="NP_852088.1">
    <property type="nucleotide sequence ID" value="NM_181423.3"/>
</dbReference>
<dbReference type="SMR" id="Q80YD1"/>
<dbReference type="BioGRID" id="237212">
    <property type="interactions" value="3"/>
</dbReference>
<dbReference type="FunCoup" id="Q80YD1">
    <property type="interactions" value="3366"/>
</dbReference>
<dbReference type="STRING" id="10090.ENSMUSP00000020273"/>
<dbReference type="GlyGen" id="Q80YD1">
    <property type="glycosylation" value="1 site, 1 N-linked glycan (1 site)"/>
</dbReference>
<dbReference type="iPTMnet" id="Q80YD1"/>
<dbReference type="PhosphoSitePlus" id="Q80YD1"/>
<dbReference type="SwissPalm" id="Q80YD1"/>
<dbReference type="PaxDb" id="10090-ENSMUSP00000020273"/>
<dbReference type="PeptideAtlas" id="Q80YD1"/>
<dbReference type="ProteomicsDB" id="254784"/>
<dbReference type="Pumba" id="Q80YD1"/>
<dbReference type="Antibodypedia" id="28732">
    <property type="antibodies" value="136 antibodies from 27 providers"/>
</dbReference>
<dbReference type="DNASU" id="338359"/>
<dbReference type="Ensembl" id="ENSMUST00000020273.16">
    <property type="protein sequence ID" value="ENSMUSP00000020273.10"/>
    <property type="gene ID" value="ENSMUSG00000020079.16"/>
</dbReference>
<dbReference type="GeneID" id="338359"/>
<dbReference type="KEGG" id="mmu:338359"/>
<dbReference type="UCSC" id="uc007fhd.1">
    <property type="organism name" value="mouse"/>
</dbReference>
<dbReference type="AGR" id="MGI:2441711"/>
<dbReference type="CTD" id="6832"/>
<dbReference type="MGI" id="MGI:2441711">
    <property type="gene designation" value="Supv3l1"/>
</dbReference>
<dbReference type="VEuPathDB" id="HostDB:ENSMUSG00000020079"/>
<dbReference type="eggNOG" id="KOG0953">
    <property type="taxonomic scope" value="Eukaryota"/>
</dbReference>
<dbReference type="GeneTree" id="ENSGT00390000003100"/>
<dbReference type="HOGENOM" id="CLU_010647_3_2_1"/>
<dbReference type="InParanoid" id="Q80YD1"/>
<dbReference type="OMA" id="QPANWYT"/>
<dbReference type="OrthoDB" id="6692397at2759"/>
<dbReference type="PhylomeDB" id="Q80YD1"/>
<dbReference type="TreeFam" id="TF106432"/>
<dbReference type="BRENDA" id="3.6.4.13">
    <property type="organism ID" value="3474"/>
</dbReference>
<dbReference type="BioGRID-ORCS" id="338359">
    <property type="hits" value="28 hits in 82 CRISPR screens"/>
</dbReference>
<dbReference type="PRO" id="PR:Q80YD1"/>
<dbReference type="Proteomes" id="UP000000589">
    <property type="component" value="Chromosome 10"/>
</dbReference>
<dbReference type="RNAct" id="Q80YD1">
    <property type="molecule type" value="protein"/>
</dbReference>
<dbReference type="Bgee" id="ENSMUSG00000020079">
    <property type="expression patterns" value="Expressed in otic placode and 261 other cell types or tissues"/>
</dbReference>
<dbReference type="ExpressionAtlas" id="Q80YD1">
    <property type="expression patterns" value="baseline and differential"/>
</dbReference>
<dbReference type="GO" id="GO:0045025">
    <property type="term" value="C:mitochondrial degradosome"/>
    <property type="evidence" value="ECO:0000250"/>
    <property type="project" value="UniProtKB"/>
</dbReference>
<dbReference type="GO" id="GO:0005759">
    <property type="term" value="C:mitochondrial matrix"/>
    <property type="evidence" value="ECO:0000250"/>
    <property type="project" value="UniProtKB"/>
</dbReference>
<dbReference type="GO" id="GO:0042645">
    <property type="term" value="C:mitochondrial nucleoid"/>
    <property type="evidence" value="ECO:0007669"/>
    <property type="project" value="UniProtKB-SubCell"/>
</dbReference>
<dbReference type="GO" id="GO:0005739">
    <property type="term" value="C:mitochondrion"/>
    <property type="evidence" value="ECO:0007005"/>
    <property type="project" value="MGI"/>
</dbReference>
<dbReference type="GO" id="GO:0005634">
    <property type="term" value="C:nucleus"/>
    <property type="evidence" value="ECO:0000250"/>
    <property type="project" value="UniProtKB"/>
</dbReference>
<dbReference type="GO" id="GO:0034458">
    <property type="term" value="F:3'-5' RNA helicase activity"/>
    <property type="evidence" value="ECO:0000250"/>
    <property type="project" value="UniProtKB"/>
</dbReference>
<dbReference type="GO" id="GO:0005524">
    <property type="term" value="F:ATP binding"/>
    <property type="evidence" value="ECO:0007669"/>
    <property type="project" value="UniProtKB-KW"/>
</dbReference>
<dbReference type="GO" id="GO:0016887">
    <property type="term" value="F:ATP hydrolysis activity"/>
    <property type="evidence" value="ECO:0007669"/>
    <property type="project" value="RHEA"/>
</dbReference>
<dbReference type="GO" id="GO:0003677">
    <property type="term" value="F:DNA binding"/>
    <property type="evidence" value="ECO:0000250"/>
    <property type="project" value="UniProtKB"/>
</dbReference>
<dbReference type="GO" id="GO:0003678">
    <property type="term" value="F:DNA helicase activity"/>
    <property type="evidence" value="ECO:0000250"/>
    <property type="project" value="UniProtKB"/>
</dbReference>
<dbReference type="GO" id="GO:0003725">
    <property type="term" value="F:double-stranded RNA binding"/>
    <property type="evidence" value="ECO:0000250"/>
    <property type="project" value="UniProtKB"/>
</dbReference>
<dbReference type="GO" id="GO:0042803">
    <property type="term" value="F:protein homodimerization activity"/>
    <property type="evidence" value="ECO:0007669"/>
    <property type="project" value="Ensembl"/>
</dbReference>
<dbReference type="GO" id="GO:0003724">
    <property type="term" value="F:RNA helicase activity"/>
    <property type="evidence" value="ECO:0000250"/>
    <property type="project" value="UniProtKB"/>
</dbReference>
<dbReference type="GO" id="GO:0006310">
    <property type="term" value="P:DNA recombination"/>
    <property type="evidence" value="ECO:0000250"/>
    <property type="project" value="UniProtKB"/>
</dbReference>
<dbReference type="GO" id="GO:0000958">
    <property type="term" value="P:mitochondrial mRNA catabolic process"/>
    <property type="evidence" value="ECO:0000250"/>
    <property type="project" value="UniProtKB"/>
</dbReference>
<dbReference type="GO" id="GO:0035946">
    <property type="term" value="P:mitochondrial mRNA surveillance"/>
    <property type="evidence" value="ECO:0000250"/>
    <property type="project" value="UniProtKB"/>
</dbReference>
<dbReference type="GO" id="GO:0035945">
    <property type="term" value="P:mitochondrial ncRNA surveillance"/>
    <property type="evidence" value="ECO:0000250"/>
    <property type="project" value="UniProtKB"/>
</dbReference>
<dbReference type="GO" id="GO:0000965">
    <property type="term" value="P:mitochondrial RNA 3'-end processing"/>
    <property type="evidence" value="ECO:0000250"/>
    <property type="project" value="UniProtKB"/>
</dbReference>
<dbReference type="GO" id="GO:2000827">
    <property type="term" value="P:mitochondrial RNA surveillance"/>
    <property type="evidence" value="ECO:0000250"/>
    <property type="project" value="UniProtKB"/>
</dbReference>
<dbReference type="GO" id="GO:0007005">
    <property type="term" value="P:mitochondrion organization"/>
    <property type="evidence" value="ECO:0000250"/>
    <property type="project" value="UniProtKB"/>
</dbReference>
<dbReference type="GO" id="GO:0043066">
    <property type="term" value="P:negative regulation of apoptotic process"/>
    <property type="evidence" value="ECO:0000250"/>
    <property type="project" value="UniProtKB"/>
</dbReference>
<dbReference type="GO" id="GO:0030307">
    <property type="term" value="P:positive regulation of cell growth"/>
    <property type="evidence" value="ECO:0000250"/>
    <property type="project" value="UniProtKB"/>
</dbReference>
<dbReference type="GO" id="GO:0000962">
    <property type="term" value="P:positive regulation of mitochondrial RNA catabolic process"/>
    <property type="evidence" value="ECO:0000250"/>
    <property type="project" value="UniProtKB"/>
</dbReference>
<dbReference type="GO" id="GO:0006401">
    <property type="term" value="P:RNA catabolic process"/>
    <property type="evidence" value="ECO:0000250"/>
    <property type="project" value="UniProtKB"/>
</dbReference>
<dbReference type="CDD" id="cd17913">
    <property type="entry name" value="DEXQc_Suv3"/>
    <property type="match status" value="1"/>
</dbReference>
<dbReference type="CDD" id="cd18805">
    <property type="entry name" value="SF2_C_suv3"/>
    <property type="match status" value="1"/>
</dbReference>
<dbReference type="FunFam" id="1.10.1740.140:FF:000001">
    <property type="entry name" value="ATP-dependent RNA helicase SUPV3L1, mitochondrial"/>
    <property type="match status" value="1"/>
</dbReference>
<dbReference type="FunFam" id="1.20.58.1080:FF:000001">
    <property type="entry name" value="ATP-dependent RNA helicase SUPV3L1, mitochondrial"/>
    <property type="match status" value="1"/>
</dbReference>
<dbReference type="FunFam" id="3.40.50.300:FF:000269">
    <property type="entry name" value="ATP-dependent RNA helicase SUPV3L1, mitochondrial"/>
    <property type="match status" value="1"/>
</dbReference>
<dbReference type="FunFam" id="3.40.50.300:FF:000446">
    <property type="entry name" value="ATP-dependent RNA helicase SUPV3L1, mitochondrial"/>
    <property type="match status" value="1"/>
</dbReference>
<dbReference type="Gene3D" id="1.10.1740.140">
    <property type="match status" value="1"/>
</dbReference>
<dbReference type="Gene3D" id="1.20.272.40">
    <property type="match status" value="1"/>
</dbReference>
<dbReference type="Gene3D" id="1.20.58.1080">
    <property type="match status" value="1"/>
</dbReference>
<dbReference type="Gene3D" id="3.40.50.300">
    <property type="entry name" value="P-loop containing nucleotide triphosphate hydrolases"/>
    <property type="match status" value="2"/>
</dbReference>
<dbReference type="InterPro" id="IPR055206">
    <property type="entry name" value="DEXQc_SUV3"/>
</dbReference>
<dbReference type="InterPro" id="IPR001650">
    <property type="entry name" value="Helicase_C-like"/>
</dbReference>
<dbReference type="InterPro" id="IPR027417">
    <property type="entry name" value="P-loop_NTPase"/>
</dbReference>
<dbReference type="InterPro" id="IPR050699">
    <property type="entry name" value="RNA-DNA_Helicase"/>
</dbReference>
<dbReference type="InterPro" id="IPR022192">
    <property type="entry name" value="SUV3_C"/>
</dbReference>
<dbReference type="InterPro" id="IPR041082">
    <property type="entry name" value="Suv3_C_1"/>
</dbReference>
<dbReference type="InterPro" id="IPR044774">
    <property type="entry name" value="Suv3_DEXQc"/>
</dbReference>
<dbReference type="InterPro" id="IPR041453">
    <property type="entry name" value="Suv3_N"/>
</dbReference>
<dbReference type="PANTHER" id="PTHR12131">
    <property type="entry name" value="ATP-DEPENDENT RNA AND DNA HELICASE"/>
    <property type="match status" value="1"/>
</dbReference>
<dbReference type="PANTHER" id="PTHR12131:SF1">
    <property type="entry name" value="ATP-DEPENDENT RNA HELICASE SUPV3L1, MITOCHONDRIAL-RELATED"/>
    <property type="match status" value="1"/>
</dbReference>
<dbReference type="Pfam" id="PF22527">
    <property type="entry name" value="DEXQc_Suv3"/>
    <property type="match status" value="1"/>
</dbReference>
<dbReference type="Pfam" id="PF00271">
    <property type="entry name" value="Helicase_C"/>
    <property type="match status" value="1"/>
</dbReference>
<dbReference type="Pfam" id="PF12513">
    <property type="entry name" value="SUV3_C"/>
    <property type="match status" value="1"/>
</dbReference>
<dbReference type="Pfam" id="PF18147">
    <property type="entry name" value="Suv3_C_1"/>
    <property type="match status" value="1"/>
</dbReference>
<dbReference type="Pfam" id="PF18114">
    <property type="entry name" value="Suv3_N"/>
    <property type="match status" value="1"/>
</dbReference>
<dbReference type="SMART" id="SM00490">
    <property type="entry name" value="HELICc"/>
    <property type="match status" value="1"/>
</dbReference>
<dbReference type="SUPFAM" id="SSF52540">
    <property type="entry name" value="P-loop containing nucleoside triphosphate hydrolases"/>
    <property type="match status" value="2"/>
</dbReference>
<dbReference type="PROSITE" id="PS51194">
    <property type="entry name" value="HELICASE_CTER"/>
    <property type="match status" value="1"/>
</dbReference>
<keyword id="KW-0007">Acetylation</keyword>
<keyword id="KW-0067">ATP-binding</keyword>
<keyword id="KW-0347">Helicase</keyword>
<keyword id="KW-0378">Hydrolase</keyword>
<keyword id="KW-0496">Mitochondrion</keyword>
<keyword id="KW-1135">Mitochondrion nucleoid</keyword>
<keyword id="KW-0547">Nucleotide-binding</keyword>
<keyword id="KW-0539">Nucleus</keyword>
<keyword id="KW-0597">Phosphoprotein</keyword>
<keyword id="KW-1185">Reference proteome</keyword>
<keyword id="KW-0809">Transit peptide</keyword>
<accession>Q80YD1</accession>
<accession>Q50HX5</accession>
<name>SUV3_MOUSE</name>
<organism>
    <name type="scientific">Mus musculus</name>
    <name type="common">Mouse</name>
    <dbReference type="NCBI Taxonomy" id="10090"/>
    <lineage>
        <taxon>Eukaryota</taxon>
        <taxon>Metazoa</taxon>
        <taxon>Chordata</taxon>
        <taxon>Craniata</taxon>
        <taxon>Vertebrata</taxon>
        <taxon>Euteleostomi</taxon>
        <taxon>Mammalia</taxon>
        <taxon>Eutheria</taxon>
        <taxon>Euarchontoglires</taxon>
        <taxon>Glires</taxon>
        <taxon>Rodentia</taxon>
        <taxon>Myomorpha</taxon>
        <taxon>Muroidea</taxon>
        <taxon>Muridae</taxon>
        <taxon>Murinae</taxon>
        <taxon>Mus</taxon>
        <taxon>Mus</taxon>
    </lineage>
</organism>
<proteinExistence type="evidence at protein level"/>
<comment type="function">
    <text evidence="1">Major helicase player in mitochondrial RNA metabolism. Component of the mitochondrial degradosome (mtEXO) complex, that degrades 3' overhang double-stranded RNA with a 3'-to-5' directionality in an ATP-dependent manner. Involved in the degradation of non-coding mitochondrial transcripts (MT-ncRNA) and tRNA-like molecules (By similarity). ATPase and ATP-dependent multisubstrate helicase, able to unwind double-stranded (ds) DNA and RNA, and RNA/DNA heteroduplexes in the 5'-to-3' direction. Plays a role in the RNA surveillance system in mitochondria; regulates the stability of mature mRNAs, the removal of aberrantly formed mRNAs and the rapid degradation of non coding processing intermediates. Also implicated in recombination and chromatin maintenance pathways. May protect cells from apoptosis. Associates with mitochondrial DNA.</text>
</comment>
<comment type="catalytic activity">
    <reaction evidence="1">
        <text>ATP + H2O = ADP + phosphate + H(+)</text>
        <dbReference type="Rhea" id="RHEA:13065"/>
        <dbReference type="ChEBI" id="CHEBI:15377"/>
        <dbReference type="ChEBI" id="CHEBI:15378"/>
        <dbReference type="ChEBI" id="CHEBI:30616"/>
        <dbReference type="ChEBI" id="CHEBI:43474"/>
        <dbReference type="ChEBI" id="CHEBI:456216"/>
        <dbReference type="EC" id="3.6.4.13"/>
    </reaction>
</comment>
<comment type="cofactor">
    <cofactor evidence="1">
        <name>Mg(2+)</name>
        <dbReference type="ChEBI" id="CHEBI:18420"/>
    </cofactor>
    <cofactor evidence="1">
        <name>Mn(2+)</name>
        <dbReference type="ChEBI" id="CHEBI:29035"/>
    </cofactor>
</comment>
<comment type="activity regulation">
    <text evidence="1">Helicase activity toward DNA substrate is inhibited by micromolar concentrations of 5,6-dichloro-1-(beta-D-ribofuranosyl)benzotriazole (DRBT) and 4,5,6,7-tetrabromobenzotriazole (TBBT). Helicase activity toward RNA substrate is inhibited by elevated concentrations of TBBT. Inhibited by some ring-expanded nucleoside analogs.</text>
</comment>
<comment type="subunit">
    <text evidence="1">Homodimer; in free form. Component of the mitochondrial degradosome (mtEXO) complex which is a heteropentamer containing 2 copies of SUPV3L1 and 3 copies of PNPT1. As part of mitochondrial degradosome complex, interacts with GRSF1 in a RNA-dependent manner; the interaction enhances the activity of the complex. Interacts with LAMTOR5/HBXIP, WRN and BLM.</text>
</comment>
<comment type="subcellular location">
    <subcellularLocation>
        <location evidence="1">Nucleus</location>
    </subcellularLocation>
    <subcellularLocation>
        <location evidence="1">Mitochondrion matrix</location>
    </subcellularLocation>
    <subcellularLocation>
        <location evidence="1">Mitochondrion matrix</location>
        <location evidence="1">Mitochondrion nucleoid</location>
    </subcellularLocation>
</comment>
<comment type="disruption phenotype">
    <text evidence="6">Die in utero before midgestation. Show elevated sister chromatid exchange (SCE).</text>
</comment>
<comment type="similarity">
    <text evidence="7">Belongs to the helicase family.</text>
</comment>